<accession>Q5B6H7</accession>
<accession>C8V6H9</accession>
<name>PREP_EMENI</name>
<gene>
    <name type="primary">cym1</name>
    <name type="ORF">AN3853</name>
</gene>
<sequence length="1049" mass="117040">MLRSYLHLGRHRTPAFRQPLGRLLRPTASILQYAQSRTLASVSSLESLPEVGDQLHGFTVQEKKQVPELHLTAIRLRHDKTHADYLHIAREDKNNVFGIGFKTNPPDATGVPHILEHTTLCGSEKYPIRDPFFKMLPRSLSNFMNAFTSSDHTMYPFATTNQQDFQNLLSVYLDATMHPLLKEEDFRQEGWRLGPEDPRAIQTQEGNLKPEDILFKGVVYNEMKGQMSDANYLYWIRFQESIFPAINNSGGDPQHITDLTHKQLVEFSKKNYNPSNAKIITYGDMPLADHLKQVGGVLNDFSKGAVDTTVKLPIELRGPINVTVPGPIDTFVSEDRQFKTSTSWYMGDITDTVETFSAGILSSLLLDGYGSPMYKALIESGLGSSFTPNTGLDTSGKIPIFSIGVTGVSEEQAPRVKEEIQRVLQETLQRGFNDEKVQGFLHQLELALRHKTANFGLGVIQKTFTSWFNGSDPMKELAWNEVINAFKSRYEKGGYLEALMQKYLINDNCLTFTMVGTPSFNKELDDKEMARKEKKFEQLTQQHGSVEKAVTELAKAELQLLEVQEKAQHADLSCLPSLRVEDISRQKEHKPVRESKVEGTDIVWREAPTNGLTYFQAVNAFADLPDDLRLLLPLFNDAIMRLGTPTRTMEQWEDLIKLKTGGVSTSNFHTTSPTEMGKYTEGLQFSGFALDKNVPDMLEILTALVTETDFTSPSAPAMIQELLRLTTNGALDAVAGTGHRYALNAAAAGLSRSFWAQEQTSGLAQLQATANLLRDAETSPERLAELIEKLRLIQSFAISKTSGLRVRLVCEPASSTQNESVLQRWVTGLPKVPSPTSQPQRFDLSTPSKKAFYDLPYKVYYSGLALPTVPFTHSSSATLSVLSQLLTHNYLHPEIREKGGAYGAGASNGPVKGLFAFTSYRDPNPANTLKVFKNSGVFARDRAWSDREINEAKLGIFQGLDAPVSVDEEGSRYFLNGITHEMDQRWREQVLDVTAKDVNEVAQTFLVDGTRRSVCLLGEKKDWAESEGWEVRKLSMNPNGSNIPSGDAA</sequence>
<protein>
    <recommendedName>
        <fullName>Presequence protease, mitochondrial</fullName>
        <shortName>PreP</shortName>
        <ecNumber evidence="2">3.4.24.-</ecNumber>
    </recommendedName>
    <alternativeName>
        <fullName>Pitrilysin metalloproteinase</fullName>
    </alternativeName>
</protein>
<keyword id="KW-0378">Hydrolase</keyword>
<keyword id="KW-0479">Metal-binding</keyword>
<keyword id="KW-0482">Metalloprotease</keyword>
<keyword id="KW-0496">Mitochondrion</keyword>
<keyword id="KW-0645">Protease</keyword>
<keyword id="KW-1185">Reference proteome</keyword>
<keyword id="KW-0809">Transit peptide</keyword>
<keyword id="KW-0862">Zinc</keyword>
<dbReference type="EC" id="3.4.24.-" evidence="2"/>
<dbReference type="EMBL" id="AACD01000062">
    <property type="protein sequence ID" value="EAA59118.1"/>
    <property type="molecule type" value="Genomic_DNA"/>
</dbReference>
<dbReference type="EMBL" id="BN001302">
    <property type="protein sequence ID" value="CBF75238.1"/>
    <property type="molecule type" value="Genomic_DNA"/>
</dbReference>
<dbReference type="RefSeq" id="XP_661457.1">
    <property type="nucleotide sequence ID" value="XM_656365.1"/>
</dbReference>
<dbReference type="SMR" id="Q5B6H7"/>
<dbReference type="FunCoup" id="Q5B6H7">
    <property type="interactions" value="655"/>
</dbReference>
<dbReference type="STRING" id="227321.Q5B6H7"/>
<dbReference type="EnsemblFungi" id="CBF75238">
    <property type="protein sequence ID" value="CBF75238"/>
    <property type="gene ID" value="ANIA_03853"/>
</dbReference>
<dbReference type="KEGG" id="ani:ANIA_03853"/>
<dbReference type="VEuPathDB" id="FungiDB:AN3853"/>
<dbReference type="eggNOG" id="KOG2019">
    <property type="taxonomic scope" value="Eukaryota"/>
</dbReference>
<dbReference type="HOGENOM" id="CLU_009165_0_0_1"/>
<dbReference type="InParanoid" id="Q5B6H7"/>
<dbReference type="OMA" id="NYLYYIR"/>
<dbReference type="OrthoDB" id="10250783at2759"/>
<dbReference type="Proteomes" id="UP000000560">
    <property type="component" value="Chromosome II"/>
</dbReference>
<dbReference type="GO" id="GO:0005758">
    <property type="term" value="C:mitochondrial intermembrane space"/>
    <property type="evidence" value="ECO:0007669"/>
    <property type="project" value="UniProtKB-SubCell"/>
</dbReference>
<dbReference type="GO" id="GO:0005759">
    <property type="term" value="C:mitochondrial matrix"/>
    <property type="evidence" value="ECO:0000318"/>
    <property type="project" value="GO_Central"/>
</dbReference>
<dbReference type="GO" id="GO:0004176">
    <property type="term" value="F:ATP-dependent peptidase activity"/>
    <property type="evidence" value="ECO:0007669"/>
    <property type="project" value="EnsemblFungi"/>
</dbReference>
<dbReference type="GO" id="GO:0004222">
    <property type="term" value="F:metalloendopeptidase activity"/>
    <property type="evidence" value="ECO:0000318"/>
    <property type="project" value="GO_Central"/>
</dbReference>
<dbReference type="GO" id="GO:0008270">
    <property type="term" value="F:zinc ion binding"/>
    <property type="evidence" value="ECO:0000250"/>
    <property type="project" value="UniProtKB"/>
</dbReference>
<dbReference type="GO" id="GO:0097308">
    <property type="term" value="P:cellular response to farnesol"/>
    <property type="evidence" value="ECO:0000270"/>
    <property type="project" value="AspGD"/>
</dbReference>
<dbReference type="GO" id="GO:0034982">
    <property type="term" value="P:mitochondrial protein processing"/>
    <property type="evidence" value="ECO:0007669"/>
    <property type="project" value="EnsemblFungi"/>
</dbReference>
<dbReference type="GO" id="GO:0016485">
    <property type="term" value="P:protein processing"/>
    <property type="evidence" value="ECO:0000250"/>
    <property type="project" value="UniProtKB"/>
</dbReference>
<dbReference type="GO" id="GO:0051603">
    <property type="term" value="P:proteolysis involved in protein catabolic process"/>
    <property type="evidence" value="ECO:0007669"/>
    <property type="project" value="EnsemblFungi"/>
</dbReference>
<dbReference type="FunFam" id="3.30.830.10:FF:000013">
    <property type="entry name" value="Mitochondrial presequence protease"/>
    <property type="match status" value="1"/>
</dbReference>
<dbReference type="FunFam" id="3.30.830.10:FF:000009">
    <property type="entry name" value="Presequence protease, mitochondrial"/>
    <property type="match status" value="1"/>
</dbReference>
<dbReference type="FunFam" id="3.30.830.10:FF:000011">
    <property type="entry name" value="Presequence protease, mitochondrial"/>
    <property type="match status" value="1"/>
</dbReference>
<dbReference type="Gene3D" id="3.30.830.10">
    <property type="entry name" value="Metalloenzyme, LuxS/M16 peptidase-like"/>
    <property type="match status" value="4"/>
</dbReference>
<dbReference type="InterPro" id="IPR011249">
    <property type="entry name" value="Metalloenz_LuxS/M16"/>
</dbReference>
<dbReference type="InterPro" id="IPR011765">
    <property type="entry name" value="Pept_M16_N"/>
</dbReference>
<dbReference type="InterPro" id="IPR007863">
    <property type="entry name" value="Peptidase_M16_C"/>
</dbReference>
<dbReference type="InterPro" id="IPR013578">
    <property type="entry name" value="Peptidase_M16C_assoc"/>
</dbReference>
<dbReference type="InterPro" id="IPR055130">
    <property type="entry name" value="PreP_C"/>
</dbReference>
<dbReference type="PANTHER" id="PTHR43016">
    <property type="entry name" value="PRESEQUENCE PROTEASE"/>
    <property type="match status" value="1"/>
</dbReference>
<dbReference type="PANTHER" id="PTHR43016:SF13">
    <property type="entry name" value="PRESEQUENCE PROTEASE, MITOCHONDRIAL"/>
    <property type="match status" value="1"/>
</dbReference>
<dbReference type="Pfam" id="PF08367">
    <property type="entry name" value="M16C_assoc"/>
    <property type="match status" value="1"/>
</dbReference>
<dbReference type="Pfam" id="PF00675">
    <property type="entry name" value="Peptidase_M16"/>
    <property type="match status" value="1"/>
</dbReference>
<dbReference type="Pfam" id="PF05193">
    <property type="entry name" value="Peptidase_M16_C"/>
    <property type="match status" value="1"/>
</dbReference>
<dbReference type="Pfam" id="PF22516">
    <property type="entry name" value="PreP_C"/>
    <property type="match status" value="1"/>
</dbReference>
<dbReference type="SMART" id="SM01264">
    <property type="entry name" value="M16C_associated"/>
    <property type="match status" value="1"/>
</dbReference>
<dbReference type="SUPFAM" id="SSF63411">
    <property type="entry name" value="LuxS/MPP-like metallohydrolase"/>
    <property type="match status" value="4"/>
</dbReference>
<reference key="1">
    <citation type="journal article" date="2005" name="Nature">
        <title>Sequencing of Aspergillus nidulans and comparative analysis with A. fumigatus and A. oryzae.</title>
        <authorList>
            <person name="Galagan J.E."/>
            <person name="Calvo S.E."/>
            <person name="Cuomo C."/>
            <person name="Ma L.-J."/>
            <person name="Wortman J.R."/>
            <person name="Batzoglou S."/>
            <person name="Lee S.-I."/>
            <person name="Bastuerkmen M."/>
            <person name="Spevak C.C."/>
            <person name="Clutterbuck J."/>
            <person name="Kapitonov V."/>
            <person name="Jurka J."/>
            <person name="Scazzocchio C."/>
            <person name="Farman M.L."/>
            <person name="Butler J."/>
            <person name="Purcell S."/>
            <person name="Harris S."/>
            <person name="Braus G.H."/>
            <person name="Draht O."/>
            <person name="Busch S."/>
            <person name="D'Enfert C."/>
            <person name="Bouchier C."/>
            <person name="Goldman G.H."/>
            <person name="Bell-Pedersen D."/>
            <person name="Griffiths-Jones S."/>
            <person name="Doonan J.H."/>
            <person name="Yu J."/>
            <person name="Vienken K."/>
            <person name="Pain A."/>
            <person name="Freitag M."/>
            <person name="Selker E.U."/>
            <person name="Archer D.B."/>
            <person name="Penalva M.A."/>
            <person name="Oakley B.R."/>
            <person name="Momany M."/>
            <person name="Tanaka T."/>
            <person name="Kumagai T."/>
            <person name="Asai K."/>
            <person name="Machida M."/>
            <person name="Nierman W.C."/>
            <person name="Denning D.W."/>
            <person name="Caddick M.X."/>
            <person name="Hynes M."/>
            <person name="Paoletti M."/>
            <person name="Fischer R."/>
            <person name="Miller B.L."/>
            <person name="Dyer P.S."/>
            <person name="Sachs M.S."/>
            <person name="Osmani S.A."/>
            <person name="Birren B.W."/>
        </authorList>
    </citation>
    <scope>NUCLEOTIDE SEQUENCE [LARGE SCALE GENOMIC DNA]</scope>
    <source>
        <strain>FGSC A4 / ATCC 38163 / CBS 112.46 / NRRL 194 / M139</strain>
    </source>
</reference>
<reference key="2">
    <citation type="journal article" date="2009" name="Fungal Genet. Biol.">
        <title>The 2008 update of the Aspergillus nidulans genome annotation: a community effort.</title>
        <authorList>
            <person name="Wortman J.R."/>
            <person name="Gilsenan J.M."/>
            <person name="Joardar V."/>
            <person name="Deegan J."/>
            <person name="Clutterbuck J."/>
            <person name="Andersen M.R."/>
            <person name="Archer D."/>
            <person name="Bencina M."/>
            <person name="Braus G."/>
            <person name="Coutinho P."/>
            <person name="von Dohren H."/>
            <person name="Doonan J."/>
            <person name="Driessen A.J."/>
            <person name="Durek P."/>
            <person name="Espeso E."/>
            <person name="Fekete E."/>
            <person name="Flipphi M."/>
            <person name="Estrada C.G."/>
            <person name="Geysens S."/>
            <person name="Goldman G."/>
            <person name="de Groot P.W."/>
            <person name="Hansen K."/>
            <person name="Harris S.D."/>
            <person name="Heinekamp T."/>
            <person name="Helmstaedt K."/>
            <person name="Henrissat B."/>
            <person name="Hofmann G."/>
            <person name="Homan T."/>
            <person name="Horio T."/>
            <person name="Horiuchi H."/>
            <person name="James S."/>
            <person name="Jones M."/>
            <person name="Karaffa L."/>
            <person name="Karanyi Z."/>
            <person name="Kato M."/>
            <person name="Keller N."/>
            <person name="Kelly D.E."/>
            <person name="Kiel J.A."/>
            <person name="Kim J.M."/>
            <person name="van der Klei I.J."/>
            <person name="Klis F.M."/>
            <person name="Kovalchuk A."/>
            <person name="Krasevec N."/>
            <person name="Kubicek C.P."/>
            <person name="Liu B."/>
            <person name="Maccabe A."/>
            <person name="Meyer V."/>
            <person name="Mirabito P."/>
            <person name="Miskei M."/>
            <person name="Mos M."/>
            <person name="Mullins J."/>
            <person name="Nelson D.R."/>
            <person name="Nielsen J."/>
            <person name="Oakley B.R."/>
            <person name="Osmani S.A."/>
            <person name="Pakula T."/>
            <person name="Paszewski A."/>
            <person name="Paulsen I."/>
            <person name="Pilsyk S."/>
            <person name="Pocsi I."/>
            <person name="Punt P.J."/>
            <person name="Ram A.F."/>
            <person name="Ren Q."/>
            <person name="Robellet X."/>
            <person name="Robson G."/>
            <person name="Seiboth B."/>
            <person name="van Solingen P."/>
            <person name="Specht T."/>
            <person name="Sun J."/>
            <person name="Taheri-Talesh N."/>
            <person name="Takeshita N."/>
            <person name="Ussery D."/>
            <person name="vanKuyk P.A."/>
            <person name="Visser H."/>
            <person name="van de Vondervoort P.J."/>
            <person name="de Vries R.P."/>
            <person name="Walton J."/>
            <person name="Xiang X."/>
            <person name="Xiong Y."/>
            <person name="Zeng A.P."/>
            <person name="Brandt B.W."/>
            <person name="Cornell M.J."/>
            <person name="van den Hondel C.A."/>
            <person name="Visser J."/>
            <person name="Oliver S.G."/>
            <person name="Turner G."/>
        </authorList>
    </citation>
    <scope>GENOME REANNOTATION</scope>
    <source>
        <strain>FGSC A4 / ATCC 38163 / CBS 112.46 / NRRL 194 / M139</strain>
    </source>
</reference>
<evidence type="ECO:0000250" key="1">
    <source>
        <dbReference type="UniProtKB" id="A0A8H8UNX0"/>
    </source>
</evidence>
<evidence type="ECO:0000250" key="2">
    <source>
        <dbReference type="UniProtKB" id="P32898"/>
    </source>
</evidence>
<evidence type="ECO:0000250" key="3">
    <source>
        <dbReference type="UniProtKB" id="Q5JRX3"/>
    </source>
</evidence>
<evidence type="ECO:0000250" key="4">
    <source>
        <dbReference type="UniProtKB" id="Q9LJL3"/>
    </source>
</evidence>
<evidence type="ECO:0000255" key="5"/>
<evidence type="ECO:0000305" key="6"/>
<comment type="function">
    <text evidence="1 2">Degrades mitochondrial transit peptides after their cleavage in the intermembrane space or in the matrix, and presequence peptides; clearance of these peptides is required to keep the presequence processing machinery running (By similarity). Preferentially cleaves the N-terminal side of paired basic amino acid residues (By similarity). Also degrades other unstructured peptides (By similarity). May function as an ATP-dependent peptidase as opposed to a metalloendopeptidase (By similarity).</text>
</comment>
<comment type="cofactor">
    <cofactor evidence="3">
        <name>Zn(2+)</name>
        <dbReference type="ChEBI" id="CHEBI:29105"/>
    </cofactor>
    <text evidence="3">Binds 1 zinc ion per subunit.</text>
</comment>
<comment type="subunit">
    <text evidence="3">Monomer and homodimer; homodimerization is induced by binding of the substrate.</text>
</comment>
<comment type="subcellular location">
    <subcellularLocation>
        <location evidence="2">Mitochondrion intermembrane space</location>
    </subcellularLocation>
    <subcellularLocation>
        <location evidence="2">Mitochondrion matrix</location>
    </subcellularLocation>
</comment>
<comment type="similarity">
    <text evidence="6">Belongs to the peptidase M16 family. PreP subfamily.</text>
</comment>
<feature type="transit peptide" description="Mitochondrion" evidence="5">
    <location>
        <begin position="1"/>
        <end position="39"/>
    </location>
</feature>
<feature type="chain" id="PRO_0000249946" description="Presequence protease, mitochondrial">
    <location>
        <begin position="40"/>
        <end position="1049"/>
    </location>
</feature>
<feature type="active site" description="Proton acceptor" evidence="3">
    <location>
        <position position="116"/>
    </location>
</feature>
<feature type="active site" evidence="4">
    <location>
        <position position="189"/>
    </location>
</feature>
<feature type="binding site" evidence="3">
    <location>
        <position position="113"/>
    </location>
    <ligand>
        <name>Zn(2+)</name>
        <dbReference type="ChEBI" id="CHEBI:29105"/>
        <note>catalytic</note>
    </ligand>
</feature>
<feature type="binding site" evidence="3">
    <location>
        <position position="117"/>
    </location>
    <ligand>
        <name>Zn(2+)</name>
        <dbReference type="ChEBI" id="CHEBI:29105"/>
        <note>catalytic</note>
    </ligand>
</feature>
<feature type="binding site" evidence="3">
    <location>
        <position position="222"/>
    </location>
    <ligand>
        <name>Zn(2+)</name>
        <dbReference type="ChEBI" id="CHEBI:29105"/>
        <note>catalytic</note>
    </ligand>
</feature>
<proteinExistence type="inferred from homology"/>
<organism>
    <name type="scientific">Emericella nidulans (strain FGSC A4 / ATCC 38163 / CBS 112.46 / NRRL 194 / M139)</name>
    <name type="common">Aspergillus nidulans</name>
    <dbReference type="NCBI Taxonomy" id="227321"/>
    <lineage>
        <taxon>Eukaryota</taxon>
        <taxon>Fungi</taxon>
        <taxon>Dikarya</taxon>
        <taxon>Ascomycota</taxon>
        <taxon>Pezizomycotina</taxon>
        <taxon>Eurotiomycetes</taxon>
        <taxon>Eurotiomycetidae</taxon>
        <taxon>Eurotiales</taxon>
        <taxon>Aspergillaceae</taxon>
        <taxon>Aspergillus</taxon>
        <taxon>Aspergillus subgen. Nidulantes</taxon>
    </lineage>
</organism>